<reference key="1">
    <citation type="journal article" date="1996" name="Genetics">
        <title>Saccharomyces cerevisiae S288C has a mutation in FLO8, a gene required for filamentous growth.</title>
        <authorList>
            <person name="Liu H."/>
            <person name="Styles C.A."/>
            <person name="Fink G.R."/>
        </authorList>
    </citation>
    <scope>NUCLEOTIDE SEQUENCE [GENOMIC DNA]</scope>
    <scope>FUNCTION</scope>
    <source>
        <strain>Sigma 1278B</strain>
    </source>
</reference>
<reference key="2">
    <citation type="journal article" date="1996" name="Mol. Gen. Genet.">
        <title>Molecular cloning and analysis of the dominant flocculation gene FLO8 from Saccharomyces cerevisiae.</title>
        <authorList>
            <person name="Kobayashi O."/>
            <person name="Suda H."/>
            <person name="Ohtani T."/>
            <person name="Sone H."/>
        </authorList>
    </citation>
    <scope>NUCLEOTIDE SEQUENCE [GENOMIC DNA]</scope>
    <scope>FUNCTION</scope>
    <source>
        <strain>Diastaticus / ATCC 60715 / YIY2-11A</strain>
    </source>
</reference>
<reference key="3">
    <citation type="journal article" date="1997" name="Nature">
        <title>The nucleotide sequence of Saccharomyces cerevisiae chromosome V.</title>
        <authorList>
            <person name="Dietrich F.S."/>
            <person name="Mulligan J.T."/>
            <person name="Hennessy K.M."/>
            <person name="Yelton M.A."/>
            <person name="Allen E."/>
            <person name="Araujo R."/>
            <person name="Aviles E."/>
            <person name="Berno A."/>
            <person name="Brennan T."/>
            <person name="Carpenter J."/>
            <person name="Chen E."/>
            <person name="Cherry J.M."/>
            <person name="Chung E."/>
            <person name="Duncan M."/>
            <person name="Guzman E."/>
            <person name="Hartzell G."/>
            <person name="Hunicke-Smith S."/>
            <person name="Hyman R.W."/>
            <person name="Kayser A."/>
            <person name="Komp C."/>
            <person name="Lashkari D."/>
            <person name="Lew H."/>
            <person name="Lin D."/>
            <person name="Mosedale D."/>
            <person name="Nakahara K."/>
            <person name="Namath A."/>
            <person name="Norgren R."/>
            <person name="Oefner P."/>
            <person name="Oh C."/>
            <person name="Petel F.X."/>
            <person name="Roberts D."/>
            <person name="Sehl P."/>
            <person name="Schramm S."/>
            <person name="Shogren T."/>
            <person name="Smith V."/>
            <person name="Taylor P."/>
            <person name="Wei Y."/>
            <person name="Botstein D."/>
            <person name="Davis R.W."/>
        </authorList>
    </citation>
    <scope>NUCLEOTIDE SEQUENCE [LARGE SCALE GENOMIC DNA]</scope>
    <source>
        <strain>ATCC 204508 / S288c</strain>
    </source>
</reference>
<reference key="4">
    <citation type="journal article" date="2014" name="G3 (Bethesda)">
        <title>The reference genome sequence of Saccharomyces cerevisiae: Then and now.</title>
        <authorList>
            <person name="Engel S.R."/>
            <person name="Dietrich F.S."/>
            <person name="Fisk D.G."/>
            <person name="Binkley G."/>
            <person name="Balakrishnan R."/>
            <person name="Costanzo M.C."/>
            <person name="Dwight S.S."/>
            <person name="Hitz B.C."/>
            <person name="Karra K."/>
            <person name="Nash R.S."/>
            <person name="Weng S."/>
            <person name="Wong E.D."/>
            <person name="Lloyd P."/>
            <person name="Skrzypek M.S."/>
            <person name="Miyasato S.R."/>
            <person name="Simison M."/>
            <person name="Cherry J.M."/>
        </authorList>
    </citation>
    <scope>GENOME REANNOTATION</scope>
    <source>
        <strain>ATCC 204508 / S288c</strain>
    </source>
</reference>
<organism>
    <name type="scientific">Saccharomyces cerevisiae (strain ATCC 204508 / S288c)</name>
    <name type="common">Baker's yeast</name>
    <dbReference type="NCBI Taxonomy" id="559292"/>
    <lineage>
        <taxon>Eukaryota</taxon>
        <taxon>Fungi</taxon>
        <taxon>Dikarya</taxon>
        <taxon>Ascomycota</taxon>
        <taxon>Saccharomycotina</taxon>
        <taxon>Saccharomycetes</taxon>
        <taxon>Saccharomycetales</taxon>
        <taxon>Saccharomycetaceae</taxon>
        <taxon>Saccharomyces</taxon>
    </lineage>
</organism>
<protein>
    <recommendedName>
        <fullName>Transcriptional activator FLO8</fullName>
    </recommendedName>
    <alternativeName>
        <fullName>Protein PDH5</fullName>
    </alternativeName>
</protein>
<evidence type="ECO:0000255" key="1">
    <source>
        <dbReference type="PROSITE-ProRule" id="PRU00126"/>
    </source>
</evidence>
<evidence type="ECO:0000256" key="2">
    <source>
        <dbReference type="SAM" id="MobiDB-lite"/>
    </source>
</evidence>
<evidence type="ECO:0000269" key="3">
    <source>
    </source>
</evidence>
<evidence type="ECO:0000269" key="4">
    <source>
    </source>
</evidence>
<evidence type="ECO:0000305" key="5"/>
<evidence type="ECO:0000305" key="6">
    <source>
    </source>
</evidence>
<evidence type="ECO:0000305" key="7">
    <source>
    </source>
</evidence>
<name>FLO8_YEAST</name>
<proteinExistence type="uncertain"/>
<comment type="function">
    <text evidence="3 4">Required for diploid filamentous growth, haploid invasive growth and flocculation. Putative transcriptional activator of FLO1.</text>
</comment>
<comment type="subcellular location">
    <subcellularLocation>
        <location>Nucleus</location>
    </subcellularLocation>
</comment>
<comment type="similarity">
    <text evidence="5">Belongs to the FLO8 family.</text>
</comment>
<comment type="caution">
    <text evidence="6 7">Could be the product of a pseudogene unlikely to encode a functional protein. Strain S288c has a stop codon in position 142, which disrupts the gene coding for this protein and produces two ORFs. Because of that it is not part of the S.cerevisiae S288c complete/reference proteome set.</text>
</comment>
<comment type="sequence caution" evidence="5">
    <conflict type="erroneous termination">
        <sequence resource="EMBL-CDS" id="AAC03206"/>
    </conflict>
    <text>Truncated C-terminus.</text>
</comment>
<comment type="sequence caution" evidence="5">
    <conflict type="erroneous termination">
        <sequence resource="EMBL-CDS" id="AAC03207"/>
    </conflict>
    <text>Truncated C-terminus.</text>
</comment>
<comment type="sequence caution" evidence="5">
    <conflict type="frameshift">
        <sequence resource="EMBL-CDS" id="BAA12076"/>
    </conflict>
</comment>
<keyword id="KW-0010">Activator</keyword>
<keyword id="KW-0539">Nucleus</keyword>
<keyword id="KW-0804">Transcription</keyword>
<keyword id="KW-0805">Transcription regulation</keyword>
<dbReference type="EMBL" id="U51431">
    <property type="protein sequence ID" value="AAC49522.1"/>
    <property type="molecule type" value="Genomic_DNA"/>
</dbReference>
<dbReference type="EMBL" id="D83713">
    <property type="protein sequence ID" value="BAA12076.1"/>
    <property type="status" value="ALT_FRAME"/>
    <property type="molecule type" value="Genomic_DNA"/>
</dbReference>
<dbReference type="EMBL" id="U18916">
    <property type="protein sequence ID" value="AAC03207.1"/>
    <property type="status" value="ALT_SEQ"/>
    <property type="molecule type" value="Genomic_DNA"/>
</dbReference>
<dbReference type="EMBL" id="U18916">
    <property type="protein sequence ID" value="AAC03206.1"/>
    <property type="status" value="ALT_SEQ"/>
    <property type="molecule type" value="Genomic_DNA"/>
</dbReference>
<dbReference type="PIR" id="S50611">
    <property type="entry name" value="S50611"/>
</dbReference>
<dbReference type="PIR" id="S50612">
    <property type="entry name" value="S50612"/>
</dbReference>
<dbReference type="SMR" id="P40068"/>
<dbReference type="BioGRID" id="36854">
    <property type="interactions" value="83"/>
</dbReference>
<dbReference type="DIP" id="DIP-5470N"/>
<dbReference type="IntAct" id="P40068">
    <property type="interactions" value="2"/>
</dbReference>
<dbReference type="MINT" id="P40068"/>
<dbReference type="PaxDb" id="4932-YER109C"/>
<dbReference type="AGR" id="SGD:S000000911"/>
<dbReference type="SGD" id="S000000911">
    <property type="gene designation" value="FLO8"/>
</dbReference>
<dbReference type="eggNOG" id="ENOG502R28W">
    <property type="taxonomic scope" value="Eukaryota"/>
</dbReference>
<dbReference type="HOGENOM" id="CLU_351656_0_0_1"/>
<dbReference type="GO" id="GO:0005737">
    <property type="term" value="C:cytoplasm"/>
    <property type="evidence" value="ECO:0007005"/>
    <property type="project" value="SGD"/>
</dbReference>
<dbReference type="GO" id="GO:0005634">
    <property type="term" value="C:nucleus"/>
    <property type="evidence" value="ECO:0000314"/>
    <property type="project" value="SGD"/>
</dbReference>
<dbReference type="GO" id="GO:0001228">
    <property type="term" value="F:DNA-binding transcription activator activity, RNA polymerase II-specific"/>
    <property type="evidence" value="ECO:0000314"/>
    <property type="project" value="SGD"/>
</dbReference>
<dbReference type="GO" id="GO:0000978">
    <property type="term" value="F:RNA polymerase II cis-regulatory region sequence-specific DNA binding"/>
    <property type="evidence" value="ECO:0000314"/>
    <property type="project" value="SGD"/>
</dbReference>
<dbReference type="GO" id="GO:1900189">
    <property type="term" value="P:positive regulation of cell adhesion involved in single-species biofilm formation"/>
    <property type="evidence" value="ECO:0000315"/>
    <property type="project" value="SGD"/>
</dbReference>
<dbReference type="GO" id="GO:1900735">
    <property type="term" value="P:positive regulation of flocculation"/>
    <property type="evidence" value="ECO:0000315"/>
    <property type="project" value="SGD"/>
</dbReference>
<dbReference type="GO" id="GO:2000219">
    <property type="term" value="P:positive regulation of invasive growth in response to glucose limitation"/>
    <property type="evidence" value="ECO:0000315"/>
    <property type="project" value="SGD"/>
</dbReference>
<dbReference type="GO" id="GO:2000222">
    <property type="term" value="P:positive regulation of pseudohyphal growth"/>
    <property type="evidence" value="ECO:0000314"/>
    <property type="project" value="SGD"/>
</dbReference>
<dbReference type="GO" id="GO:2000883">
    <property type="term" value="P:positive regulation of starch catabolic process"/>
    <property type="evidence" value="ECO:0000315"/>
    <property type="project" value="SGD"/>
</dbReference>
<dbReference type="GO" id="GO:0045944">
    <property type="term" value="P:positive regulation of transcription by RNA polymerase II"/>
    <property type="evidence" value="ECO:0000314"/>
    <property type="project" value="SGD"/>
</dbReference>
<dbReference type="InterPro" id="IPR006594">
    <property type="entry name" value="LisH"/>
</dbReference>
<dbReference type="PANTHER" id="PTHR45093:SF2">
    <property type="entry name" value="LISH DOMAIN-CONTAINING PROTEIN"/>
    <property type="match status" value="1"/>
</dbReference>
<dbReference type="PANTHER" id="PTHR45093">
    <property type="entry name" value="TRANSCRIPTION ACTIVATOR MSS11"/>
    <property type="match status" value="1"/>
</dbReference>
<dbReference type="SMART" id="SM00667">
    <property type="entry name" value="LisH"/>
    <property type="match status" value="1"/>
</dbReference>
<dbReference type="PROSITE" id="PS50896">
    <property type="entry name" value="LISH"/>
    <property type="match status" value="1"/>
</dbReference>
<accession>P40068</accession>
<accession>D3DM15</accession>
<accession>P40067</accession>
<accession>Q05751</accession>
<gene>
    <name type="primary">FLO8</name>
    <name type="synonym">PDH5</name>
    <name type="ordered locus">YER109C</name>
    <name type="ORF">YER108C</name>
</gene>
<feature type="chain" id="PRO_0000087303" description="Transcriptional activator FLO8">
    <location>
        <begin position="1"/>
        <end position="799"/>
    </location>
</feature>
<feature type="domain" description="LisH" evidence="1">
    <location>
        <begin position="73"/>
        <end position="105"/>
    </location>
</feature>
<feature type="region of interest" description="Disordered" evidence="2">
    <location>
        <begin position="1"/>
        <end position="20"/>
    </location>
</feature>
<feature type="region of interest" description="Disordered" evidence="2">
    <location>
        <begin position="37"/>
        <end position="68"/>
    </location>
</feature>
<feature type="region of interest" description="Disordered" evidence="2">
    <location>
        <begin position="101"/>
        <end position="127"/>
    </location>
</feature>
<feature type="region of interest" description="Disordered" evidence="2">
    <location>
        <begin position="255"/>
        <end position="406"/>
    </location>
</feature>
<feature type="region of interest" description="Disordered" evidence="2">
    <location>
        <begin position="431"/>
        <end position="503"/>
    </location>
</feature>
<feature type="region of interest" description="Disordered" evidence="2">
    <location>
        <begin position="568"/>
        <end position="622"/>
    </location>
</feature>
<feature type="region of interest" description="Disordered" evidence="2">
    <location>
        <begin position="644"/>
        <end position="691"/>
    </location>
</feature>
<feature type="region of interest" description="Disordered" evidence="2">
    <location>
        <begin position="705"/>
        <end position="758"/>
    </location>
</feature>
<feature type="compositionally biased region" description="Polar residues" evidence="2">
    <location>
        <begin position="1"/>
        <end position="10"/>
    </location>
</feature>
<feature type="compositionally biased region" description="Low complexity" evidence="2">
    <location>
        <begin position="41"/>
        <end position="55"/>
    </location>
</feature>
<feature type="compositionally biased region" description="Polar residues" evidence="2">
    <location>
        <begin position="270"/>
        <end position="285"/>
    </location>
</feature>
<feature type="compositionally biased region" description="Low complexity" evidence="2">
    <location>
        <begin position="307"/>
        <end position="317"/>
    </location>
</feature>
<feature type="compositionally biased region" description="Polar residues" evidence="2">
    <location>
        <begin position="318"/>
        <end position="340"/>
    </location>
</feature>
<feature type="compositionally biased region" description="Low complexity" evidence="2">
    <location>
        <begin position="341"/>
        <end position="353"/>
    </location>
</feature>
<feature type="compositionally biased region" description="Basic residues" evidence="2">
    <location>
        <begin position="354"/>
        <end position="370"/>
    </location>
</feature>
<feature type="compositionally biased region" description="Polar residues" evidence="2">
    <location>
        <begin position="371"/>
        <end position="396"/>
    </location>
</feature>
<feature type="compositionally biased region" description="Polar residues" evidence="2">
    <location>
        <begin position="460"/>
        <end position="480"/>
    </location>
</feature>
<feature type="compositionally biased region" description="Basic residues" evidence="2">
    <location>
        <begin position="482"/>
        <end position="497"/>
    </location>
</feature>
<feature type="compositionally biased region" description="Polar residues" evidence="2">
    <location>
        <begin position="584"/>
        <end position="593"/>
    </location>
</feature>
<feature type="compositionally biased region" description="Polar residues" evidence="2">
    <location>
        <begin position="660"/>
        <end position="675"/>
    </location>
</feature>
<feature type="sequence variant" description="In strain: Diastaticus / ATCC 60715 /YIY2-11A.">
    <original>Q</original>
    <variation>QQQ</variation>
    <location>
        <position position="54"/>
    </location>
</feature>
<feature type="sequence variant" description="In strain: Diastaticus / ATCC 60715 / YIY2-11A.">
    <original>V</original>
    <variation>I</variation>
    <location>
        <position position="112"/>
    </location>
</feature>
<feature type="sequence variant" description="In strain: Diastaticus / ATCC 60715 / YIY2-11A.">
    <original>P</original>
    <variation>S</variation>
    <location>
        <position position="115"/>
    </location>
</feature>
<feature type="sequence variant" description="In strain: Diastaticus / ATCC 60715 / YIY2-11A.">
    <original>C</original>
    <variation>G</variation>
    <location>
        <position position="383"/>
    </location>
</feature>
<feature type="sequence variant" description="In strain: Diastaticus / ATCC 60715 / YIY2-11A.">
    <original>A</original>
    <variation>T</variation>
    <location>
        <position position="441"/>
    </location>
</feature>
<feature type="sequence variant" description="In strain: Diastaticus / ATCC 60715 / YIY2-11A.">
    <original>A</original>
    <variation>V</variation>
    <location>
        <position position="447"/>
    </location>
</feature>
<feature type="sequence variant" description="In strain: Diastaticus / ATCC 60715 / YIY2-11A.">
    <original>R</original>
    <variation>P</variation>
    <location>
        <position position="598"/>
    </location>
</feature>
<sequence length="799" mass="86835">MSYKVNSSYPDSIPPTEQPYMASQYKQDLQSNIAMATNSEQQRQQQQQQQQQQQQWINQPTAENSDLKEKMNCKNTLNEYIFDFLTKSSLKNTAAAFAQDAHLDRDKGQNPVDGPKSKENNGNQNTFSKVVDTPQGFLYEWWQIFWDIFNTSSSRGGSEFAQQYYQLVLQEQRQEQIYRSLAVHAARLQHDAERRGEYSNEDIDPMHLAAMMLGNPMAPAVQMRNVNMNPIPIPMVGNPIVNNFSIPPYNNANPTTGATAVAPTAPPSGDFTNVGPTQNRSQNVTGWPVYNYPMQPTTENPVGNPCNNNTTNNTTNNKSPVNQPKSLKTMHSTDKPNNVPTSKSTRSRSATSKAKGKVKAGLVAKRRRKNNTATVSAGSTNACSPNITTPGSTTSEPAMVGSRVNKTPRSDIATNFRNQAIIFGEEDIYSNSKSSPSLDGASPSALASKQPTKVRKNTKKASTSAFPVESTNKLGGNSVVTGKKRSPPNTRVSRRKSTPSVILNADATKDENNMLRTFSNTIAPNIHSAPPTKTANSLPFPGINLGSFNKPAVSSPLSSVTESCFDPESGKIAGKNGPKRAVNSKVSASSPLSIATPRSGDAQKQRSSKVPGNVVIKPPHGFSTTNLNITLKNSKIITSQNNTVSQELPNGGNILEAQVGNDSRSSKGNRNTLSTPEEKKPSSNNQGYDFDALKNSSSLLFPNQAYASNNRTPNENSNVADETSASTNSGDNDNTLIQPSSNVGTTLGPQQTSTNENQNVHSQNLKFGNIGMVEDQGPDYDLNLLDTNENDFNFINWEG</sequence>